<name>RL19_STRP8</name>
<reference key="1">
    <citation type="journal article" date="2002" name="Proc. Natl. Acad. Sci. U.S.A.">
        <title>Genome sequence and comparative microarray analysis of serotype M18 group A Streptococcus strains associated with acute rheumatic fever outbreaks.</title>
        <authorList>
            <person name="Smoot J.C."/>
            <person name="Barbian K.D."/>
            <person name="Van Gompel J.J."/>
            <person name="Smoot L.M."/>
            <person name="Chaussee M.S."/>
            <person name="Sylva G.L."/>
            <person name="Sturdevant D.E."/>
            <person name="Ricklefs S.M."/>
            <person name="Porcella S.F."/>
            <person name="Parkins L.D."/>
            <person name="Beres S.B."/>
            <person name="Campbell D.S."/>
            <person name="Smith T.M."/>
            <person name="Zhang Q."/>
            <person name="Kapur V."/>
            <person name="Daly J.A."/>
            <person name="Veasy L.G."/>
            <person name="Musser J.M."/>
        </authorList>
    </citation>
    <scope>NUCLEOTIDE SEQUENCE [LARGE SCALE GENOMIC DNA]</scope>
    <source>
        <strain>MGAS8232</strain>
    </source>
</reference>
<accession>P66086</accession>
<accession>P58169</accession>
<organism>
    <name type="scientific">Streptococcus pyogenes serotype M18 (strain MGAS8232)</name>
    <dbReference type="NCBI Taxonomy" id="186103"/>
    <lineage>
        <taxon>Bacteria</taxon>
        <taxon>Bacillati</taxon>
        <taxon>Bacillota</taxon>
        <taxon>Bacilli</taxon>
        <taxon>Lactobacillales</taxon>
        <taxon>Streptococcaceae</taxon>
        <taxon>Streptococcus</taxon>
    </lineage>
</organism>
<sequence length="115" mass="13145">MNPLIQSLTEGQLRSDIPNFRPGDTVRVHAKVVEGTRERIQIFEGVVISRKGQGISEMYTVRKISGGIGVERTFPIHTPRVDKIEVIRHGKVRRAKLYYLRALQGKAARIKEIRR</sequence>
<gene>
    <name evidence="1" type="primary">rplS</name>
    <name evidence="1" type="synonym">rpl19</name>
    <name type="ordered locus">spyM18_0791</name>
</gene>
<keyword id="KW-0687">Ribonucleoprotein</keyword>
<keyword id="KW-0689">Ribosomal protein</keyword>
<feature type="chain" id="PRO_0000163547" description="Large ribosomal subunit protein bL19">
    <location>
        <begin position="1"/>
        <end position="115"/>
    </location>
</feature>
<proteinExistence type="inferred from homology"/>
<protein>
    <recommendedName>
        <fullName evidence="1">Large ribosomal subunit protein bL19</fullName>
    </recommendedName>
    <alternativeName>
        <fullName evidence="2">50S ribosomal protein L19</fullName>
    </alternativeName>
</protein>
<evidence type="ECO:0000255" key="1">
    <source>
        <dbReference type="HAMAP-Rule" id="MF_00402"/>
    </source>
</evidence>
<evidence type="ECO:0000305" key="2"/>
<comment type="function">
    <text evidence="1">This protein is located at the 30S-50S ribosomal subunit interface and may play a role in the structure and function of the aminoacyl-tRNA binding site.</text>
</comment>
<comment type="similarity">
    <text evidence="1">Belongs to the bacterial ribosomal protein bL19 family.</text>
</comment>
<dbReference type="EMBL" id="AE009949">
    <property type="protein sequence ID" value="AAL97456.1"/>
    <property type="molecule type" value="Genomic_DNA"/>
</dbReference>
<dbReference type="RefSeq" id="WP_002985298.1">
    <property type="nucleotide sequence ID" value="NC_003485.1"/>
</dbReference>
<dbReference type="SMR" id="P66086"/>
<dbReference type="GeneID" id="69901140"/>
<dbReference type="KEGG" id="spm:spyM18_0791"/>
<dbReference type="HOGENOM" id="CLU_103507_2_1_9"/>
<dbReference type="GO" id="GO:0022625">
    <property type="term" value="C:cytosolic large ribosomal subunit"/>
    <property type="evidence" value="ECO:0007669"/>
    <property type="project" value="TreeGrafter"/>
</dbReference>
<dbReference type="GO" id="GO:0003735">
    <property type="term" value="F:structural constituent of ribosome"/>
    <property type="evidence" value="ECO:0007669"/>
    <property type="project" value="InterPro"/>
</dbReference>
<dbReference type="GO" id="GO:0006412">
    <property type="term" value="P:translation"/>
    <property type="evidence" value="ECO:0007669"/>
    <property type="project" value="UniProtKB-UniRule"/>
</dbReference>
<dbReference type="FunFam" id="2.30.30.790:FF:000001">
    <property type="entry name" value="50S ribosomal protein L19"/>
    <property type="match status" value="1"/>
</dbReference>
<dbReference type="Gene3D" id="2.30.30.790">
    <property type="match status" value="1"/>
</dbReference>
<dbReference type="HAMAP" id="MF_00402">
    <property type="entry name" value="Ribosomal_bL19"/>
    <property type="match status" value="1"/>
</dbReference>
<dbReference type="InterPro" id="IPR001857">
    <property type="entry name" value="Ribosomal_bL19"/>
</dbReference>
<dbReference type="InterPro" id="IPR018257">
    <property type="entry name" value="Ribosomal_bL19_CS"/>
</dbReference>
<dbReference type="InterPro" id="IPR038657">
    <property type="entry name" value="Ribosomal_bL19_sf"/>
</dbReference>
<dbReference type="InterPro" id="IPR008991">
    <property type="entry name" value="Translation_prot_SH3-like_sf"/>
</dbReference>
<dbReference type="NCBIfam" id="TIGR01024">
    <property type="entry name" value="rplS_bact"/>
    <property type="match status" value="1"/>
</dbReference>
<dbReference type="PANTHER" id="PTHR15680:SF9">
    <property type="entry name" value="LARGE RIBOSOMAL SUBUNIT PROTEIN BL19M"/>
    <property type="match status" value="1"/>
</dbReference>
<dbReference type="PANTHER" id="PTHR15680">
    <property type="entry name" value="RIBOSOMAL PROTEIN L19"/>
    <property type="match status" value="1"/>
</dbReference>
<dbReference type="Pfam" id="PF01245">
    <property type="entry name" value="Ribosomal_L19"/>
    <property type="match status" value="1"/>
</dbReference>
<dbReference type="PIRSF" id="PIRSF002191">
    <property type="entry name" value="Ribosomal_L19"/>
    <property type="match status" value="1"/>
</dbReference>
<dbReference type="PRINTS" id="PR00061">
    <property type="entry name" value="RIBOSOMALL19"/>
</dbReference>
<dbReference type="SUPFAM" id="SSF50104">
    <property type="entry name" value="Translation proteins SH3-like domain"/>
    <property type="match status" value="1"/>
</dbReference>
<dbReference type="PROSITE" id="PS01015">
    <property type="entry name" value="RIBOSOMAL_L19"/>
    <property type="match status" value="1"/>
</dbReference>